<accession>P16020</accession>
<organism>
    <name type="scientific">Flavobacterium sp. (strain SC 12,154)</name>
    <dbReference type="NCBI Taxonomy" id="241"/>
    <lineage>
        <taxon>Bacteria</taxon>
        <taxon>Pseudomonadati</taxon>
        <taxon>Bacteroidota</taxon>
        <taxon>Flavobacteriia</taxon>
        <taxon>Flavobacteriales</taxon>
        <taxon>Flavobacteriaceae</taxon>
        <taxon>Flavobacterium</taxon>
    </lineage>
</organism>
<reference key="1">
    <citation type="journal article" date="1990" name="Nucleic Acids Res.">
        <title>Nucleotide sequence of the isopenicillin N synthase gene (pcbC) of the Gram-negative Flavobacterium sp. SC 12,154.</title>
        <authorList>
            <person name="Shiffman D."/>
            <person name="Cohen G."/>
            <person name="Aharonowitz Y."/>
            <person name="von Dohren H."/>
            <person name="Kleinkauf H."/>
            <person name="Mevarech M."/>
        </authorList>
    </citation>
    <scope>NUCLEOTIDE SEQUENCE [GENOMIC DNA]</scope>
</reference>
<gene>
    <name type="primary">pcbC</name>
</gene>
<keyword id="KW-0045">Antibiotic biosynthesis</keyword>
<keyword id="KW-0408">Iron</keyword>
<keyword id="KW-0479">Metal-binding</keyword>
<keyword id="KW-0560">Oxidoreductase</keyword>
<keyword id="KW-0847">Vitamin C</keyword>
<name>IPNS_FLASS</name>
<comment type="function">
    <text>Removes, in the presence of oxygen, 4 hydrogen atoms from delta-L-(alpha-aminoadipyl)-L-cysteinyl-D-valine (ACV) to form the azetidinone and thiazolidine rings of isopenicillin.</text>
</comment>
<comment type="catalytic activity">
    <reaction>
        <text>N-[(5S)-5-amino-5-carboxypentanoyl]-L-cysteinyl-D-valine + O2 = isopenicillin N + 2 H2O</text>
        <dbReference type="Rhea" id="RHEA:22428"/>
        <dbReference type="ChEBI" id="CHEBI:15377"/>
        <dbReference type="ChEBI" id="CHEBI:15379"/>
        <dbReference type="ChEBI" id="CHEBI:58399"/>
        <dbReference type="ChEBI" id="CHEBI:58572"/>
        <dbReference type="EC" id="1.21.3.1"/>
    </reaction>
</comment>
<comment type="cofactor">
    <cofactor>
        <name>Fe cation</name>
        <dbReference type="ChEBI" id="CHEBI:24875"/>
    </cofactor>
</comment>
<comment type="cofactor">
    <cofactor>
        <name>L-ascorbate</name>
        <dbReference type="ChEBI" id="CHEBI:38290"/>
    </cofactor>
</comment>
<comment type="pathway">
    <text>Antibiotic biosynthesis; penicillin G biosynthesis; penicillin G from L-alpha-aminoadipate and L-cysteine and L-valine: step 2/3.</text>
</comment>
<comment type="similarity">
    <text evidence="3">Belongs to the iron/ascorbate-dependent oxidoreductase family.</text>
</comment>
<sequence length="326" mass="36465">MNRHADVPVIDISGLSGNDMDVKKDIAARIDRACRGSGFFYAANHGVDLAALQKFTTDWHMAMSAEEKWELAIRAYNPANPRNRNGYYMAVEGKKANESFCYLNPSFDADHATIKAGLPSHEVNIWPDEARHPGMRRFYEAYFSDVFDVAAVILRGFAIALGREESFFERHFSMDDTLSAVSLIRYPFLENYPPLKLGPDGEKLSFEHHQDVSLITVLYQTAIPNLQVETAEGYLDIPVSDEHFLVNCGTYMAHITNGYYPAPVHRVKYINAERLSIPFFANLSHASAIDPFAPPPYAPPGGNPTVSYGDYLQHGLLDLIRANGQT</sequence>
<protein>
    <recommendedName>
        <fullName>Isopenicillin N synthase</fullName>
        <shortName>IPNS</shortName>
        <ecNumber>1.21.3.1</ecNumber>
    </recommendedName>
</protein>
<feature type="chain" id="PRO_0000219500" description="Isopenicillin N synthase">
    <location>
        <begin position="1"/>
        <end position="326"/>
    </location>
</feature>
<feature type="domain" description="Fe2OG dioxygenase" evidence="2">
    <location>
        <begin position="183"/>
        <end position="283"/>
    </location>
</feature>
<feature type="binding site" evidence="1">
    <location>
        <position position="84"/>
    </location>
    <ligand>
        <name>isopenicillin N</name>
        <dbReference type="ChEBI" id="CHEBI:58399"/>
    </ligand>
</feature>
<feature type="binding site" evidence="1">
    <location>
        <position position="84"/>
    </location>
    <ligand>
        <name>N-[(5S)-5-amino-5-carboxypentanoyl]-L-cysteinyl-D-valine</name>
        <dbReference type="ChEBI" id="CHEBI:58572"/>
    </ligand>
</feature>
<feature type="binding site" evidence="1">
    <location>
        <position position="88"/>
    </location>
    <ligand>
        <name>isopenicillin N</name>
        <dbReference type="ChEBI" id="CHEBI:58399"/>
    </ligand>
</feature>
<feature type="binding site" evidence="1">
    <location>
        <position position="88"/>
    </location>
    <ligand>
        <name>N-[(5S)-5-amino-5-carboxypentanoyl]-L-cysteinyl-D-valine</name>
        <dbReference type="ChEBI" id="CHEBI:58572"/>
    </ligand>
</feature>
<feature type="binding site" evidence="1">
    <location>
        <position position="186"/>
    </location>
    <ligand>
        <name>isopenicillin N</name>
        <dbReference type="ChEBI" id="CHEBI:58399"/>
    </ligand>
</feature>
<feature type="binding site" evidence="1">
    <location>
        <position position="186"/>
    </location>
    <ligand>
        <name>N-[(5S)-5-amino-5-carboxypentanoyl]-L-cysteinyl-D-valine</name>
        <dbReference type="ChEBI" id="CHEBI:58572"/>
    </ligand>
</feature>
<feature type="binding site" evidence="2">
    <location>
        <position position="209"/>
    </location>
    <ligand>
        <name>Fe(2+)</name>
        <dbReference type="ChEBI" id="CHEBI:29033"/>
    </ligand>
</feature>
<feature type="binding site" evidence="1">
    <location>
        <position position="209"/>
    </location>
    <ligand>
        <name>N-[(5S)-5-amino-5-carboxypentanoyl]-L-cysteinyl-D-valine</name>
        <dbReference type="ChEBI" id="CHEBI:58572"/>
    </ligand>
</feature>
<feature type="binding site" evidence="2">
    <location>
        <position position="211"/>
    </location>
    <ligand>
        <name>Fe(2+)</name>
        <dbReference type="ChEBI" id="CHEBI:29033"/>
    </ligand>
</feature>
<feature type="binding site" evidence="1">
    <location>
        <position position="211"/>
    </location>
    <ligand>
        <name>N-[(5S)-5-amino-5-carboxypentanoyl]-L-cysteinyl-D-valine</name>
        <dbReference type="ChEBI" id="CHEBI:58572"/>
    </ligand>
</feature>
<feature type="binding site" evidence="2">
    <location>
        <position position="265"/>
    </location>
    <ligand>
        <name>Fe(2+)</name>
        <dbReference type="ChEBI" id="CHEBI:29033"/>
    </ligand>
</feature>
<feature type="binding site" evidence="2">
    <location>
        <position position="274"/>
    </location>
    <ligand>
        <name>2-oxoglutarate</name>
        <dbReference type="ChEBI" id="CHEBI:16810"/>
    </ligand>
</feature>
<feature type="binding site" evidence="1">
    <location>
        <position position="276"/>
    </location>
    <ligand>
        <name>isopenicillin N</name>
        <dbReference type="ChEBI" id="CHEBI:58399"/>
    </ligand>
</feature>
<feature type="binding site" evidence="1">
    <location>
        <position position="276"/>
    </location>
    <ligand>
        <name>N-[(5S)-5-amino-5-carboxypentanoyl]-L-cysteinyl-D-valine</name>
        <dbReference type="ChEBI" id="CHEBI:58572"/>
    </ligand>
</feature>
<evidence type="ECO:0000250" key="1">
    <source>
        <dbReference type="UniProtKB" id="P05326"/>
    </source>
</evidence>
<evidence type="ECO:0000255" key="2">
    <source>
        <dbReference type="PROSITE-ProRule" id="PRU00805"/>
    </source>
</evidence>
<evidence type="ECO:0000305" key="3"/>
<dbReference type="EC" id="1.21.3.1"/>
<dbReference type="EMBL" id="X17355">
    <property type="protein sequence ID" value="CAA35233.1"/>
    <property type="molecule type" value="Genomic_DNA"/>
</dbReference>
<dbReference type="SMR" id="P16020"/>
<dbReference type="BRENDA" id="1.21.3.1">
    <property type="organism ID" value="15631"/>
</dbReference>
<dbReference type="UniPathway" id="UPA00149">
    <property type="reaction ID" value="UER00240"/>
</dbReference>
<dbReference type="GO" id="GO:0005506">
    <property type="term" value="F:iron ion binding"/>
    <property type="evidence" value="ECO:0007669"/>
    <property type="project" value="InterPro"/>
</dbReference>
<dbReference type="GO" id="GO:0016216">
    <property type="term" value="F:isopenicillin-N synthase activity"/>
    <property type="evidence" value="ECO:0007669"/>
    <property type="project" value="UniProtKB-EC"/>
</dbReference>
<dbReference type="GO" id="GO:0031418">
    <property type="term" value="F:L-ascorbic acid binding"/>
    <property type="evidence" value="ECO:0007669"/>
    <property type="project" value="UniProtKB-KW"/>
</dbReference>
<dbReference type="GO" id="GO:0017000">
    <property type="term" value="P:antibiotic biosynthetic process"/>
    <property type="evidence" value="ECO:0007669"/>
    <property type="project" value="UniProtKB-KW"/>
</dbReference>
<dbReference type="Gene3D" id="2.60.120.330">
    <property type="entry name" value="B-lactam Antibiotic, Isopenicillin N Synthase, Chain"/>
    <property type="match status" value="1"/>
</dbReference>
<dbReference type="InterPro" id="IPR026992">
    <property type="entry name" value="DIOX_N"/>
</dbReference>
<dbReference type="InterPro" id="IPR044861">
    <property type="entry name" value="IPNS-like_FE2OG_OXY"/>
</dbReference>
<dbReference type="InterPro" id="IPR027443">
    <property type="entry name" value="IPNS-like_sf"/>
</dbReference>
<dbReference type="InterPro" id="IPR002057">
    <property type="entry name" value="Isopenicillin-N_synth_CS"/>
</dbReference>
<dbReference type="InterPro" id="IPR005123">
    <property type="entry name" value="Oxoglu/Fe-dep_dioxygenase_dom"/>
</dbReference>
<dbReference type="InterPro" id="IPR050295">
    <property type="entry name" value="Plant_2OG-oxidoreductases"/>
</dbReference>
<dbReference type="PANTHER" id="PTHR47991">
    <property type="entry name" value="OXOGLUTARATE/IRON-DEPENDENT DIOXYGENASE"/>
    <property type="match status" value="1"/>
</dbReference>
<dbReference type="Pfam" id="PF03171">
    <property type="entry name" value="2OG-FeII_Oxy"/>
    <property type="match status" value="1"/>
</dbReference>
<dbReference type="Pfam" id="PF14226">
    <property type="entry name" value="DIOX_N"/>
    <property type="match status" value="1"/>
</dbReference>
<dbReference type="PRINTS" id="PR00682">
    <property type="entry name" value="IPNSYNTHASE"/>
</dbReference>
<dbReference type="SUPFAM" id="SSF51197">
    <property type="entry name" value="Clavaminate synthase-like"/>
    <property type="match status" value="1"/>
</dbReference>
<dbReference type="PROSITE" id="PS51471">
    <property type="entry name" value="FE2OG_OXY"/>
    <property type="match status" value="1"/>
</dbReference>
<dbReference type="PROSITE" id="PS00185">
    <property type="entry name" value="IPNS_1"/>
    <property type="match status" value="1"/>
</dbReference>
<dbReference type="PROSITE" id="PS00186">
    <property type="entry name" value="IPNS_2"/>
    <property type="match status" value="1"/>
</dbReference>
<proteinExistence type="inferred from homology"/>